<sequence>MKTLTVHTPSHSYPIFIGNGLLPQAGSLLKPHLGKRAAIITNETVAPLYLGTLQTALDAAGVSHFSIILPDGEAHKNWQTLNLIFDGLMQNRAERKTTLIALGGGVIGDMVGFAAATYQRGAPFIQIPTTLLSQVDSSVGGKTAINHPLGKNMIGAFYQPQAVLADLDTLHTLPARELSAGMAEVIKYGALGDIGFFEWLEQHMPELMALERAPLTQAVYRCCQMKADIVAQDETEQGIRAWLNLGHTFGHAVEAEMGYGVWLHGEAVAAGCVLAARLSEQLGKTSAADTARLAALLEAAGLPSAPPVFAFEKWLAHMSHDKKVSGGIMRFIGLNRLGEAVITEITDTDILRRTLQPYL</sequence>
<dbReference type="EC" id="4.2.3.4" evidence="1"/>
<dbReference type="EMBL" id="AE004969">
    <property type="protein sequence ID" value="AAW88853.1"/>
    <property type="molecule type" value="Genomic_DNA"/>
</dbReference>
<dbReference type="RefSeq" id="WP_003690567.1">
    <property type="nucleotide sequence ID" value="NC_002946.2"/>
</dbReference>
<dbReference type="RefSeq" id="YP_207265.1">
    <property type="nucleotide sequence ID" value="NC_002946.2"/>
</dbReference>
<dbReference type="SMR" id="Q5FAD4"/>
<dbReference type="STRING" id="242231.NGO_0092"/>
<dbReference type="GeneID" id="66752358"/>
<dbReference type="KEGG" id="ngo:NGO_0092"/>
<dbReference type="PATRIC" id="fig|242231.10.peg.120"/>
<dbReference type="HOGENOM" id="CLU_001201_0_2_4"/>
<dbReference type="UniPathway" id="UPA00053">
    <property type="reaction ID" value="UER00085"/>
</dbReference>
<dbReference type="Proteomes" id="UP000000535">
    <property type="component" value="Chromosome"/>
</dbReference>
<dbReference type="GO" id="GO:0005737">
    <property type="term" value="C:cytoplasm"/>
    <property type="evidence" value="ECO:0007669"/>
    <property type="project" value="UniProtKB-SubCell"/>
</dbReference>
<dbReference type="GO" id="GO:0003856">
    <property type="term" value="F:3-dehydroquinate synthase activity"/>
    <property type="evidence" value="ECO:0007669"/>
    <property type="project" value="UniProtKB-UniRule"/>
</dbReference>
<dbReference type="GO" id="GO:0046872">
    <property type="term" value="F:metal ion binding"/>
    <property type="evidence" value="ECO:0007669"/>
    <property type="project" value="UniProtKB-KW"/>
</dbReference>
<dbReference type="GO" id="GO:0000166">
    <property type="term" value="F:nucleotide binding"/>
    <property type="evidence" value="ECO:0007669"/>
    <property type="project" value="UniProtKB-KW"/>
</dbReference>
<dbReference type="GO" id="GO:0008652">
    <property type="term" value="P:amino acid biosynthetic process"/>
    <property type="evidence" value="ECO:0007669"/>
    <property type="project" value="UniProtKB-KW"/>
</dbReference>
<dbReference type="GO" id="GO:0009073">
    <property type="term" value="P:aromatic amino acid family biosynthetic process"/>
    <property type="evidence" value="ECO:0007669"/>
    <property type="project" value="UniProtKB-KW"/>
</dbReference>
<dbReference type="GO" id="GO:0009423">
    <property type="term" value="P:chorismate biosynthetic process"/>
    <property type="evidence" value="ECO:0007669"/>
    <property type="project" value="UniProtKB-UniRule"/>
</dbReference>
<dbReference type="CDD" id="cd08195">
    <property type="entry name" value="DHQS"/>
    <property type="match status" value="1"/>
</dbReference>
<dbReference type="FunFam" id="1.20.1090.10:FF:000002">
    <property type="entry name" value="3-dehydroquinate synthase"/>
    <property type="match status" value="1"/>
</dbReference>
<dbReference type="FunFam" id="3.40.50.1970:FF:000001">
    <property type="entry name" value="3-dehydroquinate synthase"/>
    <property type="match status" value="1"/>
</dbReference>
<dbReference type="Gene3D" id="3.40.50.1970">
    <property type="match status" value="1"/>
</dbReference>
<dbReference type="Gene3D" id="1.20.1090.10">
    <property type="entry name" value="Dehydroquinate synthase-like - alpha domain"/>
    <property type="match status" value="1"/>
</dbReference>
<dbReference type="HAMAP" id="MF_00110">
    <property type="entry name" value="DHQ_synthase"/>
    <property type="match status" value="1"/>
</dbReference>
<dbReference type="InterPro" id="IPR050071">
    <property type="entry name" value="Dehydroquinate_synthase"/>
</dbReference>
<dbReference type="InterPro" id="IPR016037">
    <property type="entry name" value="DHQ_synth_AroB"/>
</dbReference>
<dbReference type="InterPro" id="IPR030963">
    <property type="entry name" value="DHQ_synth_fam"/>
</dbReference>
<dbReference type="InterPro" id="IPR030960">
    <property type="entry name" value="DHQS/DOIS_N"/>
</dbReference>
<dbReference type="InterPro" id="IPR056179">
    <property type="entry name" value="DHQS_C"/>
</dbReference>
<dbReference type="NCBIfam" id="TIGR01357">
    <property type="entry name" value="aroB"/>
    <property type="match status" value="1"/>
</dbReference>
<dbReference type="PANTHER" id="PTHR43622">
    <property type="entry name" value="3-DEHYDROQUINATE SYNTHASE"/>
    <property type="match status" value="1"/>
</dbReference>
<dbReference type="PANTHER" id="PTHR43622:SF7">
    <property type="entry name" value="3-DEHYDROQUINATE SYNTHASE, CHLOROPLASTIC"/>
    <property type="match status" value="1"/>
</dbReference>
<dbReference type="Pfam" id="PF01761">
    <property type="entry name" value="DHQ_synthase"/>
    <property type="match status" value="1"/>
</dbReference>
<dbReference type="Pfam" id="PF24621">
    <property type="entry name" value="DHQS_C"/>
    <property type="match status" value="1"/>
</dbReference>
<dbReference type="PIRSF" id="PIRSF001455">
    <property type="entry name" value="DHQ_synth"/>
    <property type="match status" value="1"/>
</dbReference>
<dbReference type="SUPFAM" id="SSF56796">
    <property type="entry name" value="Dehydroquinate synthase-like"/>
    <property type="match status" value="1"/>
</dbReference>
<feature type="chain" id="PRO_0000231100" description="3-dehydroquinate synthase">
    <location>
        <begin position="1"/>
        <end position="359"/>
    </location>
</feature>
<feature type="binding site" evidence="1">
    <location>
        <begin position="71"/>
        <end position="76"/>
    </location>
    <ligand>
        <name>NAD(+)</name>
        <dbReference type="ChEBI" id="CHEBI:57540"/>
    </ligand>
</feature>
<feature type="binding site" evidence="1">
    <location>
        <begin position="105"/>
        <end position="109"/>
    </location>
    <ligand>
        <name>NAD(+)</name>
        <dbReference type="ChEBI" id="CHEBI:57540"/>
    </ligand>
</feature>
<feature type="binding site" evidence="1">
    <location>
        <begin position="129"/>
        <end position="130"/>
    </location>
    <ligand>
        <name>NAD(+)</name>
        <dbReference type="ChEBI" id="CHEBI:57540"/>
    </ligand>
</feature>
<feature type="binding site" evidence="1">
    <location>
        <position position="142"/>
    </location>
    <ligand>
        <name>NAD(+)</name>
        <dbReference type="ChEBI" id="CHEBI:57540"/>
    </ligand>
</feature>
<feature type="binding site" evidence="1">
    <location>
        <position position="151"/>
    </location>
    <ligand>
        <name>NAD(+)</name>
        <dbReference type="ChEBI" id="CHEBI:57540"/>
    </ligand>
</feature>
<feature type="binding site" evidence="1">
    <location>
        <begin position="169"/>
        <end position="172"/>
    </location>
    <ligand>
        <name>NAD(+)</name>
        <dbReference type="ChEBI" id="CHEBI:57540"/>
    </ligand>
</feature>
<feature type="binding site" evidence="1">
    <location>
        <position position="184"/>
    </location>
    <ligand>
        <name>Zn(2+)</name>
        <dbReference type="ChEBI" id="CHEBI:29105"/>
    </ligand>
</feature>
<feature type="binding site" evidence="1">
    <location>
        <position position="247"/>
    </location>
    <ligand>
        <name>Zn(2+)</name>
        <dbReference type="ChEBI" id="CHEBI:29105"/>
    </ligand>
</feature>
<feature type="binding site" evidence="1">
    <location>
        <position position="264"/>
    </location>
    <ligand>
        <name>Zn(2+)</name>
        <dbReference type="ChEBI" id="CHEBI:29105"/>
    </ligand>
</feature>
<comment type="function">
    <text evidence="1">Catalyzes the conversion of 3-deoxy-D-arabino-heptulosonate 7-phosphate (DAHP) to dehydroquinate (DHQ).</text>
</comment>
<comment type="catalytic activity">
    <reaction evidence="1">
        <text>7-phospho-2-dehydro-3-deoxy-D-arabino-heptonate = 3-dehydroquinate + phosphate</text>
        <dbReference type="Rhea" id="RHEA:21968"/>
        <dbReference type="ChEBI" id="CHEBI:32364"/>
        <dbReference type="ChEBI" id="CHEBI:43474"/>
        <dbReference type="ChEBI" id="CHEBI:58394"/>
        <dbReference type="EC" id="4.2.3.4"/>
    </reaction>
</comment>
<comment type="cofactor">
    <cofactor evidence="1">
        <name>Co(2+)</name>
        <dbReference type="ChEBI" id="CHEBI:48828"/>
    </cofactor>
    <cofactor evidence="1">
        <name>Zn(2+)</name>
        <dbReference type="ChEBI" id="CHEBI:29105"/>
    </cofactor>
    <text evidence="1">Binds 1 divalent metal cation per subunit. Can use either Co(2+) or Zn(2+).</text>
</comment>
<comment type="cofactor">
    <cofactor evidence="1">
        <name>NAD(+)</name>
        <dbReference type="ChEBI" id="CHEBI:57540"/>
    </cofactor>
</comment>
<comment type="pathway">
    <text evidence="1">Metabolic intermediate biosynthesis; chorismate biosynthesis; chorismate from D-erythrose 4-phosphate and phosphoenolpyruvate: step 2/7.</text>
</comment>
<comment type="subcellular location">
    <subcellularLocation>
        <location evidence="1">Cytoplasm</location>
    </subcellularLocation>
</comment>
<comment type="similarity">
    <text evidence="1">Belongs to the sugar phosphate cyclases superfamily. Dehydroquinate synthase family.</text>
</comment>
<organism>
    <name type="scientific">Neisseria gonorrhoeae (strain ATCC 700825 / FA 1090)</name>
    <dbReference type="NCBI Taxonomy" id="242231"/>
    <lineage>
        <taxon>Bacteria</taxon>
        <taxon>Pseudomonadati</taxon>
        <taxon>Pseudomonadota</taxon>
        <taxon>Betaproteobacteria</taxon>
        <taxon>Neisseriales</taxon>
        <taxon>Neisseriaceae</taxon>
        <taxon>Neisseria</taxon>
    </lineage>
</organism>
<reference key="1">
    <citation type="submission" date="2003-03" db="EMBL/GenBank/DDBJ databases">
        <title>The complete genome sequence of Neisseria gonorrhoeae.</title>
        <authorList>
            <person name="Lewis L.A."/>
            <person name="Gillaspy A.F."/>
            <person name="McLaughlin R.E."/>
            <person name="Gipson M."/>
            <person name="Ducey T.F."/>
            <person name="Ownbey T."/>
            <person name="Hartman K."/>
            <person name="Nydick C."/>
            <person name="Carson M.B."/>
            <person name="Vaughn J."/>
            <person name="Thomson C."/>
            <person name="Song L."/>
            <person name="Lin S."/>
            <person name="Yuan X."/>
            <person name="Najar F."/>
            <person name="Zhan M."/>
            <person name="Ren Q."/>
            <person name="Zhu H."/>
            <person name="Qi S."/>
            <person name="Kenton S.M."/>
            <person name="Lai H."/>
            <person name="White J.D."/>
            <person name="Clifton S."/>
            <person name="Roe B.A."/>
            <person name="Dyer D.W."/>
        </authorList>
    </citation>
    <scope>NUCLEOTIDE SEQUENCE [LARGE SCALE GENOMIC DNA]</scope>
    <source>
        <strain>ATCC 700825 / FA 1090</strain>
    </source>
</reference>
<keyword id="KW-0028">Amino-acid biosynthesis</keyword>
<keyword id="KW-0057">Aromatic amino acid biosynthesis</keyword>
<keyword id="KW-0170">Cobalt</keyword>
<keyword id="KW-0963">Cytoplasm</keyword>
<keyword id="KW-0456">Lyase</keyword>
<keyword id="KW-0479">Metal-binding</keyword>
<keyword id="KW-0520">NAD</keyword>
<keyword id="KW-0547">Nucleotide-binding</keyword>
<keyword id="KW-1185">Reference proteome</keyword>
<keyword id="KW-0862">Zinc</keyword>
<evidence type="ECO:0000255" key="1">
    <source>
        <dbReference type="HAMAP-Rule" id="MF_00110"/>
    </source>
</evidence>
<protein>
    <recommendedName>
        <fullName evidence="1">3-dehydroquinate synthase</fullName>
        <shortName evidence="1">DHQS</shortName>
        <ecNumber evidence="1">4.2.3.4</ecNumber>
    </recommendedName>
</protein>
<accession>Q5FAD4</accession>
<gene>
    <name evidence="1" type="primary">aroB</name>
    <name type="ordered locus">NGO_0092</name>
</gene>
<name>AROB_NEIG1</name>
<proteinExistence type="inferred from homology"/>